<feature type="signal peptide" evidence="1">
    <location>
        <begin position="1"/>
        <end position="20"/>
    </location>
</feature>
<feature type="chain" id="PRO_0000013652" description="Uncharacterized protein AF_1118">
    <location>
        <begin position="21"/>
        <end position="178"/>
    </location>
</feature>
<dbReference type="EMBL" id="AE000782">
    <property type="protein sequence ID" value="AAB90141.1"/>
    <property type="molecule type" value="Genomic_DNA"/>
</dbReference>
<dbReference type="PIR" id="E69389">
    <property type="entry name" value="E69389"/>
</dbReference>
<dbReference type="RefSeq" id="WP_010878614.1">
    <property type="nucleotide sequence ID" value="NC_000917.1"/>
</dbReference>
<dbReference type="STRING" id="224325.AF_1118"/>
<dbReference type="PaxDb" id="224325-AF_1118"/>
<dbReference type="EnsemblBacteria" id="AAB90141">
    <property type="protein sequence ID" value="AAB90141"/>
    <property type="gene ID" value="AF_1118"/>
</dbReference>
<dbReference type="KEGG" id="afu:AF_1118"/>
<dbReference type="HOGENOM" id="CLU_1507301_0_0_2"/>
<dbReference type="PhylomeDB" id="O29147"/>
<dbReference type="Proteomes" id="UP000002199">
    <property type="component" value="Chromosome"/>
</dbReference>
<keyword id="KW-1185">Reference proteome</keyword>
<keyword id="KW-0732">Signal</keyword>
<sequence>MKKLLVASLALLILTPVALAEDFSMDAEQLAVVLLKNTISNLEMSNKFVEILDNSGSDSVYQNLWGVIYGALAVMAVNNEVTTALLDEVSKSQELSSKVGDAINSLGENSTVVFGDVNGSKGLTLILRKESEVLQNGSYPYSDNETLSEAYARVVAEFTSRSVDFIVKLFSKIDEAWV</sequence>
<gene>
    <name type="ordered locus">AF_1118</name>
</gene>
<organism>
    <name type="scientific">Archaeoglobus fulgidus (strain ATCC 49558 / DSM 4304 / JCM 9628 / NBRC 100126 / VC-16)</name>
    <dbReference type="NCBI Taxonomy" id="224325"/>
    <lineage>
        <taxon>Archaea</taxon>
        <taxon>Methanobacteriati</taxon>
        <taxon>Methanobacteriota</taxon>
        <taxon>Archaeoglobi</taxon>
        <taxon>Archaeoglobales</taxon>
        <taxon>Archaeoglobaceae</taxon>
        <taxon>Archaeoglobus</taxon>
    </lineage>
</organism>
<evidence type="ECO:0000255" key="1"/>
<accession>O29147</accession>
<protein>
    <recommendedName>
        <fullName>Uncharacterized protein AF_1118</fullName>
    </recommendedName>
</protein>
<proteinExistence type="inferred from homology"/>
<reference key="1">
    <citation type="journal article" date="1997" name="Nature">
        <title>The complete genome sequence of the hyperthermophilic, sulphate-reducing archaeon Archaeoglobus fulgidus.</title>
        <authorList>
            <person name="Klenk H.-P."/>
            <person name="Clayton R.A."/>
            <person name="Tomb J.-F."/>
            <person name="White O."/>
            <person name="Nelson K.E."/>
            <person name="Ketchum K.A."/>
            <person name="Dodson R.J."/>
            <person name="Gwinn M.L."/>
            <person name="Hickey E.K."/>
            <person name="Peterson J.D."/>
            <person name="Richardson D.L."/>
            <person name="Kerlavage A.R."/>
            <person name="Graham D.E."/>
            <person name="Kyrpides N.C."/>
            <person name="Fleischmann R.D."/>
            <person name="Quackenbush J."/>
            <person name="Lee N.H."/>
            <person name="Sutton G.G."/>
            <person name="Gill S.R."/>
            <person name="Kirkness E.F."/>
            <person name="Dougherty B.A."/>
            <person name="McKenney K."/>
            <person name="Adams M.D."/>
            <person name="Loftus B.J."/>
            <person name="Peterson S.N."/>
            <person name="Reich C.I."/>
            <person name="McNeil L.K."/>
            <person name="Badger J.H."/>
            <person name="Glodek A."/>
            <person name="Zhou L."/>
            <person name="Overbeek R."/>
            <person name="Gocayne J.D."/>
            <person name="Weidman J.F."/>
            <person name="McDonald L.A."/>
            <person name="Utterback T.R."/>
            <person name="Cotton M.D."/>
            <person name="Spriggs T."/>
            <person name="Artiach P."/>
            <person name="Kaine B.P."/>
            <person name="Sykes S.M."/>
            <person name="Sadow P.W."/>
            <person name="D'Andrea K.P."/>
            <person name="Bowman C."/>
            <person name="Fujii C."/>
            <person name="Garland S.A."/>
            <person name="Mason T.M."/>
            <person name="Olsen G.J."/>
            <person name="Fraser C.M."/>
            <person name="Smith H.O."/>
            <person name="Woese C.R."/>
            <person name="Venter J.C."/>
        </authorList>
    </citation>
    <scope>NUCLEOTIDE SEQUENCE [LARGE SCALE GENOMIC DNA]</scope>
    <source>
        <strain>ATCC 49558 / DSM 4304 / JCM 9628 / NBRC 100126 / VC-16</strain>
    </source>
</reference>
<name>Y1118_ARCFU</name>